<name>COAA_STRCO</name>
<comment type="catalytic activity">
    <reaction>
        <text>(R)-pantothenate + ATP = (R)-4'-phosphopantothenate + ADP + H(+)</text>
        <dbReference type="Rhea" id="RHEA:16373"/>
        <dbReference type="ChEBI" id="CHEBI:10986"/>
        <dbReference type="ChEBI" id="CHEBI:15378"/>
        <dbReference type="ChEBI" id="CHEBI:29032"/>
        <dbReference type="ChEBI" id="CHEBI:30616"/>
        <dbReference type="ChEBI" id="CHEBI:456216"/>
        <dbReference type="EC" id="2.7.1.33"/>
    </reaction>
</comment>
<comment type="pathway">
    <text>Cofactor biosynthesis; coenzyme A biosynthesis; CoA from (R)-pantothenate: step 1/5.</text>
</comment>
<comment type="subcellular location">
    <subcellularLocation>
        <location evidence="1">Cytoplasm</location>
    </subcellularLocation>
</comment>
<comment type="similarity">
    <text evidence="4">Belongs to the prokaryotic pantothenate kinase family.</text>
</comment>
<proteinExistence type="inferred from homology"/>
<gene>
    <name type="primary">coaA</name>
    <name type="ordered locus">SCO4738</name>
    <name type="ORF">SC6G4.16c</name>
</gene>
<evidence type="ECO:0000250" key="1"/>
<evidence type="ECO:0000255" key="2"/>
<evidence type="ECO:0000256" key="3">
    <source>
        <dbReference type="SAM" id="MobiDB-lite"/>
    </source>
</evidence>
<evidence type="ECO:0000305" key="4"/>
<reference key="1">
    <citation type="journal article" date="2002" name="Nature">
        <title>Complete genome sequence of the model actinomycete Streptomyces coelicolor A3(2).</title>
        <authorList>
            <person name="Bentley S.D."/>
            <person name="Chater K.F."/>
            <person name="Cerdeno-Tarraga A.-M."/>
            <person name="Challis G.L."/>
            <person name="Thomson N.R."/>
            <person name="James K.D."/>
            <person name="Harris D.E."/>
            <person name="Quail M.A."/>
            <person name="Kieser H."/>
            <person name="Harper D."/>
            <person name="Bateman A."/>
            <person name="Brown S."/>
            <person name="Chandra G."/>
            <person name="Chen C.W."/>
            <person name="Collins M."/>
            <person name="Cronin A."/>
            <person name="Fraser A."/>
            <person name="Goble A."/>
            <person name="Hidalgo J."/>
            <person name="Hornsby T."/>
            <person name="Howarth S."/>
            <person name="Huang C.-H."/>
            <person name="Kieser T."/>
            <person name="Larke L."/>
            <person name="Murphy L.D."/>
            <person name="Oliver K."/>
            <person name="O'Neil S."/>
            <person name="Rabbinowitsch E."/>
            <person name="Rajandream M.A."/>
            <person name="Rutherford K.M."/>
            <person name="Rutter S."/>
            <person name="Seeger K."/>
            <person name="Saunders D."/>
            <person name="Sharp S."/>
            <person name="Squares R."/>
            <person name="Squares S."/>
            <person name="Taylor K."/>
            <person name="Warren T."/>
            <person name="Wietzorrek A."/>
            <person name="Woodward J.R."/>
            <person name="Barrell B.G."/>
            <person name="Parkhill J."/>
            <person name="Hopwood D.A."/>
        </authorList>
    </citation>
    <scope>NUCLEOTIDE SEQUENCE [LARGE SCALE GENOMIC DNA]</scope>
    <source>
        <strain>ATCC BAA-471 / A3(2) / M145</strain>
    </source>
</reference>
<feature type="chain" id="PRO_0000194452" description="Pantothenate kinase">
    <location>
        <begin position="1"/>
        <end position="329"/>
    </location>
</feature>
<feature type="region of interest" description="Disordered" evidence="3">
    <location>
        <begin position="1"/>
        <end position="21"/>
    </location>
</feature>
<feature type="binding site" evidence="2">
    <location>
        <begin position="107"/>
        <end position="114"/>
    </location>
    <ligand>
        <name>ATP</name>
        <dbReference type="ChEBI" id="CHEBI:30616"/>
    </ligand>
</feature>
<keyword id="KW-0067">ATP-binding</keyword>
<keyword id="KW-0173">Coenzyme A biosynthesis</keyword>
<keyword id="KW-0963">Cytoplasm</keyword>
<keyword id="KW-0418">Kinase</keyword>
<keyword id="KW-0547">Nucleotide-binding</keyword>
<keyword id="KW-1185">Reference proteome</keyword>
<keyword id="KW-0808">Transferase</keyword>
<dbReference type="EC" id="2.7.1.33"/>
<dbReference type="EMBL" id="AL939121">
    <property type="protein sequence ID" value="CAA20394.1"/>
    <property type="molecule type" value="Genomic_DNA"/>
</dbReference>
<dbReference type="PIR" id="T35567">
    <property type="entry name" value="T35567"/>
</dbReference>
<dbReference type="RefSeq" id="NP_628896.1">
    <property type="nucleotide sequence ID" value="NC_003888.3"/>
</dbReference>
<dbReference type="RefSeq" id="WP_003974235.1">
    <property type="nucleotide sequence ID" value="NZ_VNID01000016.1"/>
</dbReference>
<dbReference type="SMR" id="O86779"/>
<dbReference type="FunCoup" id="O86779">
    <property type="interactions" value="221"/>
</dbReference>
<dbReference type="STRING" id="100226.gene:17762387"/>
<dbReference type="PaxDb" id="100226-SCO4738"/>
<dbReference type="GeneID" id="97462920"/>
<dbReference type="KEGG" id="sco:SCO4738"/>
<dbReference type="PATRIC" id="fig|100226.15.peg.4809"/>
<dbReference type="eggNOG" id="COG1072">
    <property type="taxonomic scope" value="Bacteria"/>
</dbReference>
<dbReference type="HOGENOM" id="CLU_053818_1_1_11"/>
<dbReference type="InParanoid" id="O86779"/>
<dbReference type="OrthoDB" id="1550976at2"/>
<dbReference type="PhylomeDB" id="O86779"/>
<dbReference type="UniPathway" id="UPA00241">
    <property type="reaction ID" value="UER00352"/>
</dbReference>
<dbReference type="Proteomes" id="UP000001973">
    <property type="component" value="Chromosome"/>
</dbReference>
<dbReference type="GO" id="GO:0005737">
    <property type="term" value="C:cytoplasm"/>
    <property type="evidence" value="ECO:0000318"/>
    <property type="project" value="GO_Central"/>
</dbReference>
<dbReference type="GO" id="GO:0005524">
    <property type="term" value="F:ATP binding"/>
    <property type="evidence" value="ECO:0007669"/>
    <property type="project" value="UniProtKB-UniRule"/>
</dbReference>
<dbReference type="GO" id="GO:0004594">
    <property type="term" value="F:pantothenate kinase activity"/>
    <property type="evidence" value="ECO:0000318"/>
    <property type="project" value="GO_Central"/>
</dbReference>
<dbReference type="GO" id="GO:0015937">
    <property type="term" value="P:coenzyme A biosynthetic process"/>
    <property type="evidence" value="ECO:0000318"/>
    <property type="project" value="GO_Central"/>
</dbReference>
<dbReference type="CDD" id="cd02025">
    <property type="entry name" value="PanK"/>
    <property type="match status" value="1"/>
</dbReference>
<dbReference type="FunFam" id="3.40.50.300:FF:000242">
    <property type="entry name" value="Pantothenate kinase"/>
    <property type="match status" value="1"/>
</dbReference>
<dbReference type="Gene3D" id="3.40.50.300">
    <property type="entry name" value="P-loop containing nucleotide triphosphate hydrolases"/>
    <property type="match status" value="1"/>
</dbReference>
<dbReference type="HAMAP" id="MF_00215">
    <property type="entry name" value="Pantothen_kinase_1"/>
    <property type="match status" value="1"/>
</dbReference>
<dbReference type="InterPro" id="IPR027417">
    <property type="entry name" value="P-loop_NTPase"/>
</dbReference>
<dbReference type="InterPro" id="IPR004566">
    <property type="entry name" value="PanK"/>
</dbReference>
<dbReference type="InterPro" id="IPR006083">
    <property type="entry name" value="PRK/URK"/>
</dbReference>
<dbReference type="NCBIfam" id="TIGR00554">
    <property type="entry name" value="panK_bact"/>
    <property type="match status" value="1"/>
</dbReference>
<dbReference type="PANTHER" id="PTHR10285">
    <property type="entry name" value="URIDINE KINASE"/>
    <property type="match status" value="1"/>
</dbReference>
<dbReference type="Pfam" id="PF00485">
    <property type="entry name" value="PRK"/>
    <property type="match status" value="1"/>
</dbReference>
<dbReference type="PIRSF" id="PIRSF000545">
    <property type="entry name" value="Pantothenate_kin"/>
    <property type="match status" value="1"/>
</dbReference>
<dbReference type="SUPFAM" id="SSF52540">
    <property type="entry name" value="P-loop containing nucleoside triphosphate hydrolases"/>
    <property type="match status" value="1"/>
</dbReference>
<protein>
    <recommendedName>
        <fullName>Pantothenate kinase</fullName>
        <ecNumber>2.7.1.33</ecNumber>
    </recommendedName>
    <alternativeName>
        <fullName>Pantothenic acid kinase</fullName>
    </alternativeName>
</protein>
<organism>
    <name type="scientific">Streptomyces coelicolor (strain ATCC BAA-471 / A3(2) / M145)</name>
    <dbReference type="NCBI Taxonomy" id="100226"/>
    <lineage>
        <taxon>Bacteria</taxon>
        <taxon>Bacillati</taxon>
        <taxon>Actinomycetota</taxon>
        <taxon>Actinomycetes</taxon>
        <taxon>Kitasatosporales</taxon>
        <taxon>Streptomycetaceae</taxon>
        <taxon>Streptomyces</taxon>
        <taxon>Streptomyces albidoflavus group</taxon>
    </lineage>
</organism>
<sequence length="329" mass="37116">MISPVPSIPRSAHRQRPEATPYVDLTRPEWSALRDKTPLPLTAEEVEKLRGLGDVIDLDEVRDIYLPLSRLLNLYVGATDGLRGALNTFLGEQGSQSGTPFVIGVAGSVAVGKSTVARLLQALLSRWPEHPRVELVTTDGFLLPTRELEARGLMSRKGFPESYDRRALTRFVADIKAGKAEVTAPVYSHLIYDIVPDQRLVVRRPDILIVEGLNVLQPALPGKDGRTRVGLADYFDFSVYVDARTEDIERWYLNRFRKLRATAFQNPSSYFRKYTQVSEEEALDYARTTWRTINKPNLVENVAPTRGRATLVLRKGPDHKVQRLSLRKL</sequence>
<accession>O86779</accession>